<keyword id="KW-0030">Aminoacyl-tRNA synthetase</keyword>
<keyword id="KW-0067">ATP-binding</keyword>
<keyword id="KW-0963">Cytoplasm</keyword>
<keyword id="KW-0436">Ligase</keyword>
<keyword id="KW-0547">Nucleotide-binding</keyword>
<keyword id="KW-0648">Protein biosynthesis</keyword>
<protein>
    <recommendedName>
        <fullName evidence="1">Asparagine--tRNA ligase</fullName>
        <ecNumber evidence="1">6.1.1.22</ecNumber>
    </recommendedName>
    <alternativeName>
        <fullName evidence="1">Asparaginyl-tRNA synthetase</fullName>
        <shortName evidence="1">AsnRS</shortName>
    </alternativeName>
</protein>
<organism>
    <name type="scientific">Staphylococcus aureus (strain Newman)</name>
    <dbReference type="NCBI Taxonomy" id="426430"/>
    <lineage>
        <taxon>Bacteria</taxon>
        <taxon>Bacillati</taxon>
        <taxon>Bacillota</taxon>
        <taxon>Bacilli</taxon>
        <taxon>Bacillales</taxon>
        <taxon>Staphylococcaceae</taxon>
        <taxon>Staphylococcus</taxon>
    </lineage>
</organism>
<feature type="chain" id="PRO_1000072532" description="Asparagine--tRNA ligase">
    <location>
        <begin position="1"/>
        <end position="430"/>
    </location>
</feature>
<accession>A6QH05</accession>
<evidence type="ECO:0000255" key="1">
    <source>
        <dbReference type="HAMAP-Rule" id="MF_00534"/>
    </source>
</evidence>
<reference key="1">
    <citation type="journal article" date="2008" name="J. Bacteriol.">
        <title>Genome sequence of Staphylococcus aureus strain Newman and comparative analysis of staphylococcal genomes: polymorphism and evolution of two major pathogenicity islands.</title>
        <authorList>
            <person name="Baba T."/>
            <person name="Bae T."/>
            <person name="Schneewind O."/>
            <person name="Takeuchi F."/>
            <person name="Hiramatsu K."/>
        </authorList>
    </citation>
    <scope>NUCLEOTIDE SEQUENCE [LARGE SCALE GENOMIC DNA]</scope>
    <source>
        <strain>Newman</strain>
    </source>
</reference>
<dbReference type="EC" id="6.1.1.22" evidence="1"/>
<dbReference type="EMBL" id="AP009351">
    <property type="protein sequence ID" value="BAF67637.1"/>
    <property type="molecule type" value="Genomic_DNA"/>
</dbReference>
<dbReference type="RefSeq" id="WP_000858789.1">
    <property type="nucleotide sequence ID" value="NZ_JBBIAE010000001.1"/>
</dbReference>
<dbReference type="SMR" id="A6QH05"/>
<dbReference type="KEGG" id="sae:NWMN_1365"/>
<dbReference type="HOGENOM" id="CLU_004553_2_0_9"/>
<dbReference type="Proteomes" id="UP000006386">
    <property type="component" value="Chromosome"/>
</dbReference>
<dbReference type="GO" id="GO:0005737">
    <property type="term" value="C:cytoplasm"/>
    <property type="evidence" value="ECO:0007669"/>
    <property type="project" value="UniProtKB-SubCell"/>
</dbReference>
<dbReference type="GO" id="GO:0004816">
    <property type="term" value="F:asparagine-tRNA ligase activity"/>
    <property type="evidence" value="ECO:0007669"/>
    <property type="project" value="UniProtKB-UniRule"/>
</dbReference>
<dbReference type="GO" id="GO:0005524">
    <property type="term" value="F:ATP binding"/>
    <property type="evidence" value="ECO:0007669"/>
    <property type="project" value="UniProtKB-UniRule"/>
</dbReference>
<dbReference type="GO" id="GO:0140096">
    <property type="term" value="F:catalytic activity, acting on a protein"/>
    <property type="evidence" value="ECO:0007669"/>
    <property type="project" value="UniProtKB-ARBA"/>
</dbReference>
<dbReference type="GO" id="GO:0003676">
    <property type="term" value="F:nucleic acid binding"/>
    <property type="evidence" value="ECO:0007669"/>
    <property type="project" value="InterPro"/>
</dbReference>
<dbReference type="GO" id="GO:0016740">
    <property type="term" value="F:transferase activity"/>
    <property type="evidence" value="ECO:0007669"/>
    <property type="project" value="UniProtKB-ARBA"/>
</dbReference>
<dbReference type="GO" id="GO:0006421">
    <property type="term" value="P:asparaginyl-tRNA aminoacylation"/>
    <property type="evidence" value="ECO:0007669"/>
    <property type="project" value="UniProtKB-UniRule"/>
</dbReference>
<dbReference type="CDD" id="cd04323">
    <property type="entry name" value="AsnRS_cyto_like_N"/>
    <property type="match status" value="1"/>
</dbReference>
<dbReference type="CDD" id="cd00776">
    <property type="entry name" value="AsxRS_core"/>
    <property type="match status" value="1"/>
</dbReference>
<dbReference type="Gene3D" id="3.30.930.10">
    <property type="entry name" value="Bira Bifunctional Protein, Domain 2"/>
    <property type="match status" value="1"/>
</dbReference>
<dbReference type="Gene3D" id="2.40.50.140">
    <property type="entry name" value="Nucleic acid-binding proteins"/>
    <property type="match status" value="1"/>
</dbReference>
<dbReference type="HAMAP" id="MF_00534">
    <property type="entry name" value="Asn_tRNA_synth"/>
    <property type="match status" value="1"/>
</dbReference>
<dbReference type="InterPro" id="IPR004364">
    <property type="entry name" value="Aa-tRNA-synt_II"/>
</dbReference>
<dbReference type="InterPro" id="IPR006195">
    <property type="entry name" value="aa-tRNA-synth_II"/>
</dbReference>
<dbReference type="InterPro" id="IPR045864">
    <property type="entry name" value="aa-tRNA-synth_II/BPL/LPL"/>
</dbReference>
<dbReference type="InterPro" id="IPR004522">
    <property type="entry name" value="Asn-tRNA-ligase"/>
</dbReference>
<dbReference type="InterPro" id="IPR002312">
    <property type="entry name" value="Asp/Asn-tRNA-synth_IIb"/>
</dbReference>
<dbReference type="InterPro" id="IPR012340">
    <property type="entry name" value="NA-bd_OB-fold"/>
</dbReference>
<dbReference type="InterPro" id="IPR004365">
    <property type="entry name" value="NA-bd_OB_tRNA"/>
</dbReference>
<dbReference type="NCBIfam" id="TIGR00457">
    <property type="entry name" value="asnS"/>
    <property type="match status" value="1"/>
</dbReference>
<dbReference type="NCBIfam" id="NF003037">
    <property type="entry name" value="PRK03932.1"/>
    <property type="match status" value="1"/>
</dbReference>
<dbReference type="NCBIfam" id="NF003483">
    <property type="entry name" value="PRK05159.1"/>
    <property type="match status" value="1"/>
</dbReference>
<dbReference type="PANTHER" id="PTHR22594:SF34">
    <property type="entry name" value="ASPARAGINE--TRNA LIGASE, MITOCHONDRIAL-RELATED"/>
    <property type="match status" value="1"/>
</dbReference>
<dbReference type="PANTHER" id="PTHR22594">
    <property type="entry name" value="ASPARTYL/LYSYL-TRNA SYNTHETASE"/>
    <property type="match status" value="1"/>
</dbReference>
<dbReference type="Pfam" id="PF00152">
    <property type="entry name" value="tRNA-synt_2"/>
    <property type="match status" value="1"/>
</dbReference>
<dbReference type="Pfam" id="PF01336">
    <property type="entry name" value="tRNA_anti-codon"/>
    <property type="match status" value="1"/>
</dbReference>
<dbReference type="PRINTS" id="PR01042">
    <property type="entry name" value="TRNASYNTHASP"/>
</dbReference>
<dbReference type="SUPFAM" id="SSF55681">
    <property type="entry name" value="Class II aaRS and biotin synthetases"/>
    <property type="match status" value="1"/>
</dbReference>
<dbReference type="SUPFAM" id="SSF50249">
    <property type="entry name" value="Nucleic acid-binding proteins"/>
    <property type="match status" value="1"/>
</dbReference>
<dbReference type="PROSITE" id="PS50862">
    <property type="entry name" value="AA_TRNA_LIGASE_II"/>
    <property type="match status" value="1"/>
</dbReference>
<proteinExistence type="inferred from homology"/>
<sequence length="430" mass="49158">MKTTIKQAKDHLNQDVTIGAWLTNKRSSGKIAFLQLRDGTGFMQGVVVKSEVDEEVFKLAKEITQESSLYVTGTITEDNRSDLGYEMQVKSIEVISEAHDYPITPKNHGTEFLMDHRHLWLRSKKQHAVMKIRNEVIRATYEFFNKDGFTKVDPPILTASAPEGTSELFHTKYFDQDAFLSQSGQLYLEAAAMAHGKVFSFGPTFRAEKSKTRRHLIEFWMIEGEMAFTNHAESLEIQEQYVTHVVKSVLENCKLELKILERDTSKLEKVATPFPRISYDDAIEFLKAEGFDDIEWGEDFGAPHETAIANHYDLPVFITNYPTKIKPFYMQPNPENEETVLCADLIAPEGYGEIIGGSERVDDLELLEQRVKEHGLDEEAYSYYLDLRRYGSVPHCGFGLGLERTVAWISGVEHVRETAPFPRLLNRLYP</sequence>
<comment type="catalytic activity">
    <reaction evidence="1">
        <text>tRNA(Asn) + L-asparagine + ATP = L-asparaginyl-tRNA(Asn) + AMP + diphosphate + H(+)</text>
        <dbReference type="Rhea" id="RHEA:11180"/>
        <dbReference type="Rhea" id="RHEA-COMP:9659"/>
        <dbReference type="Rhea" id="RHEA-COMP:9674"/>
        <dbReference type="ChEBI" id="CHEBI:15378"/>
        <dbReference type="ChEBI" id="CHEBI:30616"/>
        <dbReference type="ChEBI" id="CHEBI:33019"/>
        <dbReference type="ChEBI" id="CHEBI:58048"/>
        <dbReference type="ChEBI" id="CHEBI:78442"/>
        <dbReference type="ChEBI" id="CHEBI:78515"/>
        <dbReference type="ChEBI" id="CHEBI:456215"/>
        <dbReference type="EC" id="6.1.1.22"/>
    </reaction>
</comment>
<comment type="subunit">
    <text evidence="1">Homodimer.</text>
</comment>
<comment type="subcellular location">
    <subcellularLocation>
        <location evidence="1">Cytoplasm</location>
    </subcellularLocation>
</comment>
<comment type="similarity">
    <text evidence="1">Belongs to the class-II aminoacyl-tRNA synthetase family.</text>
</comment>
<gene>
    <name evidence="1" type="primary">asnS</name>
    <name type="ordered locus">NWMN_1365</name>
</gene>
<name>SYN_STAAE</name>